<gene>
    <name type="primary">alb-b</name>
</gene>
<feature type="signal peptide" evidence="2">
    <location>
        <begin position="1"/>
        <end position="18"/>
    </location>
</feature>
<feature type="propeptide" id="PRO_0000001091" evidence="2">
    <location>
        <begin position="19"/>
        <end position="24"/>
    </location>
</feature>
<feature type="chain" id="PRO_0000001092" description="Albumin B">
    <location>
        <begin position="25"/>
        <end position="607"/>
    </location>
</feature>
<feature type="domain" description="Albumin 1" evidence="3">
    <location>
        <begin position="22"/>
        <end position="209"/>
    </location>
</feature>
<feature type="domain" description="Albumin 2" evidence="3">
    <location>
        <begin position="210"/>
        <end position="402"/>
    </location>
</feature>
<feature type="domain" description="Albumin 3" evidence="3">
    <location>
        <begin position="403"/>
        <end position="600"/>
    </location>
</feature>
<feature type="binding site" evidence="1">
    <location>
        <position position="30"/>
    </location>
    <ligand>
        <name>Cu cation</name>
        <dbReference type="ChEBI" id="CHEBI:23378"/>
    </ligand>
</feature>
<feature type="disulfide bond" evidence="3">
    <location>
        <begin position="80"/>
        <end position="88"/>
    </location>
</feature>
<feature type="disulfide bond" evidence="3">
    <location>
        <begin position="101"/>
        <end position="117"/>
    </location>
</feature>
<feature type="disulfide bond" evidence="3">
    <location>
        <begin position="116"/>
        <end position="127"/>
    </location>
</feature>
<feature type="disulfide bond" evidence="3">
    <location>
        <begin position="147"/>
        <end position="192"/>
    </location>
</feature>
<feature type="disulfide bond" evidence="3">
    <location>
        <begin position="191"/>
        <end position="200"/>
    </location>
</feature>
<feature type="disulfide bond" evidence="3">
    <location>
        <begin position="223"/>
        <end position="269"/>
    </location>
</feature>
<feature type="disulfide bond" evidence="3">
    <location>
        <begin position="268"/>
        <end position="276"/>
    </location>
</feature>
<feature type="disulfide bond" evidence="3">
    <location>
        <begin position="288"/>
        <end position="302"/>
    </location>
</feature>
<feature type="disulfide bond" evidence="3">
    <location>
        <begin position="301"/>
        <end position="312"/>
    </location>
</feature>
<feature type="disulfide bond" evidence="3">
    <location>
        <begin position="339"/>
        <end position="384"/>
    </location>
</feature>
<feature type="disulfide bond" evidence="3">
    <location>
        <begin position="383"/>
        <end position="392"/>
    </location>
</feature>
<feature type="disulfide bond" evidence="3">
    <location>
        <begin position="415"/>
        <end position="461"/>
    </location>
</feature>
<feature type="disulfide bond" evidence="3">
    <location>
        <begin position="460"/>
        <end position="471"/>
    </location>
</feature>
<feature type="disulfide bond" evidence="3">
    <location>
        <begin position="484"/>
        <end position="500"/>
    </location>
</feature>
<feature type="disulfide bond" evidence="3">
    <location>
        <begin position="499"/>
        <end position="510"/>
    </location>
</feature>
<feature type="disulfide bond" evidence="3">
    <location>
        <begin position="537"/>
        <end position="582"/>
    </location>
</feature>
<feature type="disulfide bond" evidence="3">
    <location>
        <begin position="581"/>
        <end position="590"/>
    </location>
</feature>
<feature type="sequence conflict" description="In Ref. 3; AAA49642." evidence="4" ref="3">
    <original>S</original>
    <variation>L</variation>
    <location>
        <position position="503"/>
    </location>
</feature>
<feature type="sequence conflict" description="In Ref. 3; AAA49642." evidence="4" ref="3">
    <original>H</original>
    <variation>D</variation>
    <location>
        <position position="531"/>
    </location>
</feature>
<organism>
    <name type="scientific">Xenopus laevis</name>
    <name type="common">African clawed frog</name>
    <dbReference type="NCBI Taxonomy" id="8355"/>
    <lineage>
        <taxon>Eukaryota</taxon>
        <taxon>Metazoa</taxon>
        <taxon>Chordata</taxon>
        <taxon>Craniata</taxon>
        <taxon>Vertebrata</taxon>
        <taxon>Euteleostomi</taxon>
        <taxon>Amphibia</taxon>
        <taxon>Batrachia</taxon>
        <taxon>Anura</taxon>
        <taxon>Pipoidea</taxon>
        <taxon>Pipidae</taxon>
        <taxon>Xenopodinae</taxon>
        <taxon>Xenopus</taxon>
        <taxon>Xenopus</taxon>
    </lineage>
</organism>
<dbReference type="EMBL" id="M21442">
    <property type="protein sequence ID" value="AAA49637.1"/>
    <property type="molecule type" value="mRNA"/>
</dbReference>
<dbReference type="EMBL" id="M28276">
    <property type="protein sequence ID" value="AAA49642.1"/>
    <property type="molecule type" value="mRNA"/>
</dbReference>
<dbReference type="PIR" id="B41682">
    <property type="entry name" value="ABXL72"/>
</dbReference>
<dbReference type="SMR" id="P14872"/>
<dbReference type="IntAct" id="P14872">
    <property type="interactions" value="1"/>
</dbReference>
<dbReference type="AGR" id="Xenbase:XB-GENE-6256209"/>
<dbReference type="Xenbase" id="XB-GENE-6256209">
    <property type="gene designation" value="alb.S"/>
</dbReference>
<dbReference type="Proteomes" id="UP000186698">
    <property type="component" value="Unplaced"/>
</dbReference>
<dbReference type="GO" id="GO:0072562">
    <property type="term" value="C:blood microparticle"/>
    <property type="evidence" value="ECO:0007669"/>
    <property type="project" value="TreeGrafter"/>
</dbReference>
<dbReference type="GO" id="GO:0005737">
    <property type="term" value="C:cytoplasm"/>
    <property type="evidence" value="ECO:0000318"/>
    <property type="project" value="GO_Central"/>
</dbReference>
<dbReference type="GO" id="GO:0008289">
    <property type="term" value="F:lipid binding"/>
    <property type="evidence" value="ECO:0007669"/>
    <property type="project" value="UniProtKB-KW"/>
</dbReference>
<dbReference type="GO" id="GO:0046872">
    <property type="term" value="F:metal ion binding"/>
    <property type="evidence" value="ECO:0007669"/>
    <property type="project" value="UniProtKB-KW"/>
</dbReference>
<dbReference type="CDD" id="cd00015">
    <property type="entry name" value="ALBUMIN"/>
    <property type="match status" value="3"/>
</dbReference>
<dbReference type="FunFam" id="1.10.246.10:FF:000001">
    <property type="entry name" value="Serum albumin"/>
    <property type="match status" value="1"/>
</dbReference>
<dbReference type="Gene3D" id="1.10.246.10">
    <property type="match status" value="6"/>
</dbReference>
<dbReference type="InterPro" id="IPR000264">
    <property type="entry name" value="ALB/AFP/VDB"/>
</dbReference>
<dbReference type="InterPro" id="IPR020858">
    <property type="entry name" value="Serum_albumin-like"/>
</dbReference>
<dbReference type="InterPro" id="IPR021177">
    <property type="entry name" value="Serum_albumin/AFP/Afamin"/>
</dbReference>
<dbReference type="InterPro" id="IPR020857">
    <property type="entry name" value="Serum_albumin_CS"/>
</dbReference>
<dbReference type="InterPro" id="IPR014760">
    <property type="entry name" value="Serum_albumin_N"/>
</dbReference>
<dbReference type="PANTHER" id="PTHR11385:SF14">
    <property type="entry name" value="AFAMIN"/>
    <property type="match status" value="1"/>
</dbReference>
<dbReference type="PANTHER" id="PTHR11385">
    <property type="entry name" value="SERUM ALBUMIN-RELATED"/>
    <property type="match status" value="1"/>
</dbReference>
<dbReference type="Pfam" id="PF00273">
    <property type="entry name" value="Serum_albumin"/>
    <property type="match status" value="3"/>
</dbReference>
<dbReference type="PIRSF" id="PIRSF002520">
    <property type="entry name" value="Serum_albumin_subgroup"/>
    <property type="match status" value="1"/>
</dbReference>
<dbReference type="PRINTS" id="PR00802">
    <property type="entry name" value="SERUMALBUMIN"/>
</dbReference>
<dbReference type="SMART" id="SM00103">
    <property type="entry name" value="ALBUMIN"/>
    <property type="match status" value="3"/>
</dbReference>
<dbReference type="SUPFAM" id="SSF48552">
    <property type="entry name" value="Serum albumin-like"/>
    <property type="match status" value="3"/>
</dbReference>
<dbReference type="PROSITE" id="PS00212">
    <property type="entry name" value="ALBUMIN_1"/>
    <property type="match status" value="3"/>
</dbReference>
<dbReference type="PROSITE" id="PS51438">
    <property type="entry name" value="ALBUMIN_2"/>
    <property type="match status" value="3"/>
</dbReference>
<evidence type="ECO:0000250" key="1"/>
<evidence type="ECO:0000255" key="2"/>
<evidence type="ECO:0000255" key="3">
    <source>
        <dbReference type="PROSITE-ProRule" id="PRU00769"/>
    </source>
</evidence>
<evidence type="ECO:0000305" key="4"/>
<name>ALBUB_XENLA</name>
<keyword id="KW-0165">Cleavage on pair of basic residues</keyword>
<keyword id="KW-0186">Copper</keyword>
<keyword id="KW-1015">Disulfide bond</keyword>
<keyword id="KW-0446">Lipid-binding</keyword>
<keyword id="KW-0479">Metal-binding</keyword>
<keyword id="KW-1185">Reference proteome</keyword>
<keyword id="KW-0677">Repeat</keyword>
<keyword id="KW-0964">Secreted</keyword>
<keyword id="KW-0732">Signal</keyword>
<accession>P14872</accession>
<proteinExistence type="evidence at transcript level"/>
<protein>
    <recommendedName>
        <fullName>Albumin B</fullName>
    </recommendedName>
    <alternativeName>
        <fullName>74 kDa serum albumin</fullName>
    </alternativeName>
</protein>
<comment type="function">
    <text>Serum albumin, the main protein of plasma, has a good binding capacity for water, Ca(2+), Na(+), K(+), fatty acids, hormones, bilirubin and drugs. Its main function is the regulation of the colloidal osmotic pressure of blood.</text>
</comment>
<comment type="subcellular location">
    <subcellularLocation>
        <location>Secreted</location>
    </subcellularLocation>
</comment>
<comment type="tissue specificity">
    <text>Plasma.</text>
</comment>
<comment type="similarity">
    <text evidence="3">Belongs to the ALB/AFP/VDB family.</text>
</comment>
<sequence>MKWITLICLLISSSFIESRILFKRDTDADHHKHIADVYTALTERTFKGLTLAIVSQNLQKCSLEELSKLVNEINDFAKSCINDKTPECEKPVGTLFFDKLCADPAVGVNYEWSKECCAKQDPERAQCFKAHRDHEHTSIKPEPEETCKLLKEHPDDLLSAFIHEEARNHPDLYPPAVLALTKQYHKLAEHCCEEEDKEKCFSEKMKQLMKQSHSIEDKQHHFCWILDNFPEKVLKALNLARVSHRYPKAEFKLAHNFTEEVTHFIKDCCHDDMFECMTERLELTEHTCQHKDELSSKLEKCCNIPLLERTYCIVTLENDDVPAELSQPITEFTEDPHVCEKYAENNEVFLGRYLHAVSRKHQELSEQFLLQSAKEYESLLNKCCKTDNPPECYKDGADRFMNEAKERFAYLKQNCDILHEHGEYLFENELLIRYTKKMPQVSDETLIGIAHQMADIGEHCCAVPENQRMPCAEGDLTILIGKMCERQKKTFINNHVAHCCTDSYSGMRSCFTALGPDEDYVPPPVTDDTFHFDDKICTANDKEKQHIKQKFLVKLIKVSPKLEKNHIDECSAEFLKMVQKCCTADEHQPCFDTEKPVLIEHCQKLHP</sequence>
<reference key="1">
    <citation type="journal article" date="1989" name="Mol. Endocrinol.">
        <title>Xenopus laevis serum albumin: sequence of the complementary deoxyribonucleic acids encoding the 68- and 74-kilodalton peptides and the regulation of albumin gene expression by thyroid hormone during development.</title>
        <authorList>
            <person name="Moskaitis J.E."/>
            <person name="Sargent T.D."/>
            <person name="Smith L.H. Jr."/>
            <person name="Pastori R.L."/>
            <person name="Schoenberg D.R."/>
        </authorList>
    </citation>
    <scope>NUCLEOTIDE SEQUENCE [MRNA] OF 3-607</scope>
</reference>
<reference key="2">
    <citation type="journal article" date="1988" name="J. Mol. Biol.">
        <title>5'-flanking and 5'-proximal exon regions of the two Xenopus albumin genes. Deletion analysis of constitutive promoter function.</title>
        <authorList>
            <person name="Schorpp M."/>
            <person name="Doebbeling U."/>
            <person name="Wagner U."/>
            <person name="Ryffel G.U."/>
        </authorList>
    </citation>
    <scope>NUCLEOTIDE SEQUENCE [MRNA] OF 1-48</scope>
</reference>
<reference key="3">
    <citation type="journal article" date="1985" name="Eur. J. Biochem.">
        <title>Deinduction of transcription of Xenopus 74-kDa albumin genes and destabilization of mRNA by estrogen in vivo and in hepatocyte cultures.</title>
        <authorList>
            <person name="Wolffe A.P."/>
            <person name="Glover J.F."/>
            <person name="Martin S.C."/>
            <person name="Tenniswood M.P.R."/>
            <person name="Williams J.L."/>
            <person name="Tata J.R."/>
        </authorList>
    </citation>
    <scope>NUCLEOTIDE SEQUENCE [MRNA] OF 459-557</scope>
    <source>
        <tissue>Liver</tissue>
    </source>
</reference>